<organism>
    <name type="scientific">Escherichia coli O6:H1 (strain CFT073 / ATCC 700928 / UPEC)</name>
    <dbReference type="NCBI Taxonomy" id="199310"/>
    <lineage>
        <taxon>Bacteria</taxon>
        <taxon>Pseudomonadati</taxon>
        <taxon>Pseudomonadota</taxon>
        <taxon>Gammaproteobacteria</taxon>
        <taxon>Enterobacterales</taxon>
        <taxon>Enterobacteriaceae</taxon>
        <taxon>Escherichia</taxon>
    </lineage>
</organism>
<accession>Q8FDC6</accession>
<keyword id="KW-1185">Reference proteome</keyword>
<sequence length="436" mass="45318">MFDSTLNPLWQRYILAVQEEVKPALGCTEPISLALAAAVAAAELEGPVERVEAWVSPNLMKNGLGVTVPGTGMVGLPIAAALGALGGNANAGLEVLKDATAQAIADAKALLAAGKVSVKIQEPCDEILFSRAKVWNGEKWACVTIVGGHTNIVHIETHNGVVFTQQACVTEGEQESPLTVLSRTTLAEILKFVNEVPFAAIRFILDSAKLNCALSQEGLSGNWGLHIGATLEKQCARGLLAKDLSSSIVIRTSAASDARMGGATLPAMSNSGSGNQGITATMPVVVVAEHFGADDERLARALMLSHLSAIYIHNQLPRLSALCAATTAAMGAAAGMAWLVDGRYETISMAISSMIGDVSGMICDGASNSCAMKVSTSASAAWKAVLMALDDTAVTGNEGIVAHDVEQSIANLCALASHSMQQTDRQIIEIMASKAR</sequence>
<protein>
    <recommendedName>
        <fullName evidence="1">UPF0597 protein YhaM</fullName>
    </recommendedName>
</protein>
<gene>
    <name evidence="1" type="primary">yhaM</name>
    <name type="ordered locus">c3867</name>
</gene>
<feature type="chain" id="PRO_0000339823" description="UPF0597 protein YhaM">
    <location>
        <begin position="1"/>
        <end position="436"/>
    </location>
</feature>
<name>YHAM_ECOL6</name>
<comment type="similarity">
    <text evidence="1">Belongs to the UPF0597 family.</text>
</comment>
<proteinExistence type="inferred from homology"/>
<reference key="1">
    <citation type="journal article" date="2002" name="Proc. Natl. Acad. Sci. U.S.A.">
        <title>Extensive mosaic structure revealed by the complete genome sequence of uropathogenic Escherichia coli.</title>
        <authorList>
            <person name="Welch R.A."/>
            <person name="Burland V."/>
            <person name="Plunkett G. III"/>
            <person name="Redford P."/>
            <person name="Roesch P."/>
            <person name="Rasko D."/>
            <person name="Buckles E.L."/>
            <person name="Liou S.-R."/>
            <person name="Boutin A."/>
            <person name="Hackett J."/>
            <person name="Stroud D."/>
            <person name="Mayhew G.F."/>
            <person name="Rose D.J."/>
            <person name="Zhou S."/>
            <person name="Schwartz D.C."/>
            <person name="Perna N.T."/>
            <person name="Mobley H.L.T."/>
            <person name="Donnenberg M.S."/>
            <person name="Blattner F.R."/>
        </authorList>
    </citation>
    <scope>NUCLEOTIDE SEQUENCE [LARGE SCALE GENOMIC DNA]</scope>
    <source>
        <strain>CFT073 / ATCC 700928 / UPEC</strain>
    </source>
</reference>
<dbReference type="EMBL" id="AE014075">
    <property type="protein sequence ID" value="AAN82310.1"/>
    <property type="molecule type" value="Genomic_DNA"/>
</dbReference>
<dbReference type="KEGG" id="ecc:c3867"/>
<dbReference type="eggNOG" id="COG3681">
    <property type="taxonomic scope" value="Bacteria"/>
</dbReference>
<dbReference type="HOGENOM" id="CLU_051840_0_0_6"/>
<dbReference type="BioCyc" id="ECOL199310:C3867-MONOMER"/>
<dbReference type="Proteomes" id="UP000001410">
    <property type="component" value="Chromosome"/>
</dbReference>
<dbReference type="GO" id="GO:0080146">
    <property type="term" value="F:L-cysteine desulfhydrase activity"/>
    <property type="evidence" value="ECO:0007669"/>
    <property type="project" value="TreeGrafter"/>
</dbReference>
<dbReference type="GO" id="GO:0019450">
    <property type="term" value="P:L-cysteine catabolic process to pyruvate"/>
    <property type="evidence" value="ECO:0007669"/>
    <property type="project" value="TreeGrafter"/>
</dbReference>
<dbReference type="HAMAP" id="MF_01845">
    <property type="entry name" value="UPF0597"/>
    <property type="match status" value="1"/>
</dbReference>
<dbReference type="InterPro" id="IPR005130">
    <property type="entry name" value="Ser_deHydtase-like_asu"/>
</dbReference>
<dbReference type="InterPro" id="IPR021144">
    <property type="entry name" value="UPF0597"/>
</dbReference>
<dbReference type="PANTHER" id="PTHR30501">
    <property type="entry name" value="UPF0597 PROTEIN YHAM"/>
    <property type="match status" value="1"/>
</dbReference>
<dbReference type="PANTHER" id="PTHR30501:SF2">
    <property type="entry name" value="UPF0597 PROTEIN YHAM"/>
    <property type="match status" value="1"/>
</dbReference>
<dbReference type="Pfam" id="PF03313">
    <property type="entry name" value="SDH_alpha"/>
    <property type="match status" value="1"/>
</dbReference>
<dbReference type="PIRSF" id="PIRSF006054">
    <property type="entry name" value="UCP006054"/>
    <property type="match status" value="1"/>
</dbReference>
<evidence type="ECO:0000255" key="1">
    <source>
        <dbReference type="HAMAP-Rule" id="MF_01845"/>
    </source>
</evidence>